<dbReference type="EMBL" id="AJ851746">
    <property type="protein sequence ID" value="CAH65380.1"/>
    <property type="molecule type" value="mRNA"/>
</dbReference>
<dbReference type="RefSeq" id="NP_001012600.1">
    <property type="nucleotide sequence ID" value="NM_001012582.2"/>
</dbReference>
<dbReference type="FunCoup" id="Q5F3A4">
    <property type="interactions" value="408"/>
</dbReference>
<dbReference type="GlyCosmos" id="Q5F3A4">
    <property type="glycosylation" value="1 site, No reported glycans"/>
</dbReference>
<dbReference type="GlyGen" id="Q5F3A4">
    <property type="glycosylation" value="1 site"/>
</dbReference>
<dbReference type="PaxDb" id="9031-ENSGALP00000023120"/>
<dbReference type="GeneID" id="422795"/>
<dbReference type="KEGG" id="gga:422795"/>
<dbReference type="CTD" id="768211"/>
<dbReference type="VEuPathDB" id="HostDB:geneid_422795"/>
<dbReference type="eggNOG" id="ENOG502R0TD">
    <property type="taxonomic scope" value="Eukaryota"/>
</dbReference>
<dbReference type="HOGENOM" id="CLU_084225_0_0_1"/>
<dbReference type="InParanoid" id="Q5F3A4"/>
<dbReference type="OMA" id="NICTRCS"/>
<dbReference type="OrthoDB" id="9353106at2759"/>
<dbReference type="PhylomeDB" id="Q5F3A4"/>
<dbReference type="PRO" id="PR:Q5F3A4"/>
<dbReference type="Proteomes" id="UP000000539">
    <property type="component" value="Chromosome 4"/>
</dbReference>
<dbReference type="Bgee" id="ENSGALG00000014336">
    <property type="expression patterns" value="Expressed in lung and 14 other cell types or tissues"/>
</dbReference>
<dbReference type="GO" id="GO:0005886">
    <property type="term" value="C:plasma membrane"/>
    <property type="evidence" value="ECO:0000318"/>
    <property type="project" value="GO_Central"/>
</dbReference>
<dbReference type="GO" id="GO:1900745">
    <property type="term" value="P:positive regulation of p38MAPK cascade"/>
    <property type="evidence" value="ECO:0000250"/>
    <property type="project" value="UniProtKB"/>
</dbReference>
<dbReference type="InterPro" id="IPR042315">
    <property type="entry name" value="RELL1"/>
</dbReference>
<dbReference type="InterPro" id="IPR022248">
    <property type="entry name" value="TNF_rcpt_RELT"/>
</dbReference>
<dbReference type="PANTHER" id="PTHR31037:SF1">
    <property type="entry name" value="RELT-LIKE PROTEIN 1"/>
    <property type="match status" value="1"/>
</dbReference>
<dbReference type="PANTHER" id="PTHR31037">
    <property type="entry name" value="RELT-LIKE PROTEIN 1-RELATED"/>
    <property type="match status" value="1"/>
</dbReference>
<dbReference type="Pfam" id="PF12606">
    <property type="entry name" value="RELT"/>
    <property type="match status" value="1"/>
</dbReference>
<name>RELL1_CHICK</name>
<feature type="signal peptide" evidence="2">
    <location>
        <begin position="1"/>
        <end position="23"/>
    </location>
</feature>
<feature type="chain" id="PRO_0000323592" description="RELT-like protein 1">
    <location>
        <begin position="24"/>
        <end position="288"/>
    </location>
</feature>
<feature type="topological domain" description="Extracellular" evidence="2">
    <location>
        <begin position="24"/>
        <end position="57"/>
    </location>
</feature>
<feature type="transmembrane region" description="Helical" evidence="2">
    <location>
        <begin position="58"/>
        <end position="78"/>
    </location>
</feature>
<feature type="topological domain" description="Cytoplasmic" evidence="2">
    <location>
        <begin position="79"/>
        <end position="288"/>
    </location>
</feature>
<feature type="region of interest" description="Disordered" evidence="3">
    <location>
        <begin position="145"/>
        <end position="172"/>
    </location>
</feature>
<feature type="region of interest" description="Disordered" evidence="3">
    <location>
        <begin position="237"/>
        <end position="288"/>
    </location>
</feature>
<feature type="compositionally biased region" description="Low complexity" evidence="3">
    <location>
        <begin position="152"/>
        <end position="172"/>
    </location>
</feature>
<feature type="compositionally biased region" description="Basic and acidic residues" evidence="3">
    <location>
        <begin position="237"/>
        <end position="246"/>
    </location>
</feature>
<feature type="glycosylation site" description="N-linked (GlcNAc...) asparagine" evidence="2">
    <location>
        <position position="25"/>
    </location>
</feature>
<gene>
    <name type="primary">RELL1</name>
    <name type="ORF">RCJMB04_24l24</name>
</gene>
<keyword id="KW-1003">Cell membrane</keyword>
<keyword id="KW-0325">Glycoprotein</keyword>
<keyword id="KW-0472">Membrane</keyword>
<keyword id="KW-1185">Reference proteome</keyword>
<keyword id="KW-0732">Signal</keyword>
<keyword id="KW-0812">Transmembrane</keyword>
<keyword id="KW-1133">Transmembrane helix</keyword>
<comment type="subcellular location">
    <subcellularLocation>
        <location evidence="1">Cell membrane</location>
        <topology evidence="1">Single-pass type I membrane protein</topology>
    </subcellularLocation>
</comment>
<comment type="similarity">
    <text evidence="4">Belongs to the RELT family.</text>
</comment>
<sequence>MAPPAASGIPSIAPSLGPTAVWLGNRSDLGDVQALASRDLPTTTVTAGNNNKPEHLEYVAFVLVPVFFIMGLLGILICHVLKKKGYRCTTEAEEVEEEEKPDEKIEMNETAHENSDTVGQIINYIMKNEANADVLKAMVADSSVFEPESPMSPNAPGSPTSPGSPLSPGAASLKHNCKGHHLHTVGGVIEKDVCSRCSHKRWHHIKPAHKSKEHRRSRLGEVTVLSVGRFRVTKVEHKSNSKERKSLMSVTGVEGLNGDMPATPVKQEAKEAPATPVKEGTQERRSSE</sequence>
<accession>Q5F3A4</accession>
<organism>
    <name type="scientific">Gallus gallus</name>
    <name type="common">Chicken</name>
    <dbReference type="NCBI Taxonomy" id="9031"/>
    <lineage>
        <taxon>Eukaryota</taxon>
        <taxon>Metazoa</taxon>
        <taxon>Chordata</taxon>
        <taxon>Craniata</taxon>
        <taxon>Vertebrata</taxon>
        <taxon>Euteleostomi</taxon>
        <taxon>Archelosauria</taxon>
        <taxon>Archosauria</taxon>
        <taxon>Dinosauria</taxon>
        <taxon>Saurischia</taxon>
        <taxon>Theropoda</taxon>
        <taxon>Coelurosauria</taxon>
        <taxon>Aves</taxon>
        <taxon>Neognathae</taxon>
        <taxon>Galloanserae</taxon>
        <taxon>Galliformes</taxon>
        <taxon>Phasianidae</taxon>
        <taxon>Phasianinae</taxon>
        <taxon>Gallus</taxon>
    </lineage>
</organism>
<evidence type="ECO:0000250" key="1">
    <source>
        <dbReference type="UniProtKB" id="Q8IUW5"/>
    </source>
</evidence>
<evidence type="ECO:0000255" key="2"/>
<evidence type="ECO:0000256" key="3">
    <source>
        <dbReference type="SAM" id="MobiDB-lite"/>
    </source>
</evidence>
<evidence type="ECO:0000305" key="4"/>
<protein>
    <recommendedName>
        <fullName>RELT-like protein 1</fullName>
    </recommendedName>
</protein>
<proteinExistence type="evidence at transcript level"/>
<reference key="1">
    <citation type="journal article" date="2005" name="Genome Biol.">
        <title>Full-length cDNAs from chicken bursal lymphocytes to facilitate gene function analysis.</title>
        <authorList>
            <person name="Caldwell R.B."/>
            <person name="Kierzek A.M."/>
            <person name="Arakawa H."/>
            <person name="Bezzubov Y."/>
            <person name="Zaim J."/>
            <person name="Fiedler P."/>
            <person name="Kutter S."/>
            <person name="Blagodatski A."/>
            <person name="Kostovska D."/>
            <person name="Koter M."/>
            <person name="Plachy J."/>
            <person name="Carninci P."/>
            <person name="Hayashizaki Y."/>
            <person name="Buerstedde J.-M."/>
        </authorList>
    </citation>
    <scope>NUCLEOTIDE SEQUENCE [LARGE SCALE MRNA]</scope>
    <source>
        <strain>CB</strain>
        <tissue>Bursa of Fabricius</tissue>
    </source>
</reference>